<organism>
    <name type="scientific">Eleutherodactylus coqui</name>
    <name type="common">Puerto Rican coqui</name>
    <dbReference type="NCBI Taxonomy" id="57060"/>
    <lineage>
        <taxon>Eukaryota</taxon>
        <taxon>Metazoa</taxon>
        <taxon>Chordata</taxon>
        <taxon>Craniata</taxon>
        <taxon>Vertebrata</taxon>
        <taxon>Euteleostomi</taxon>
        <taxon>Amphibia</taxon>
        <taxon>Batrachia</taxon>
        <taxon>Anura</taxon>
        <taxon>Neobatrachia</taxon>
        <taxon>Hyloidea</taxon>
        <taxon>Eleutherodactylidae</taxon>
        <taxon>Eleutherodactylinae</taxon>
        <taxon>Eleutherodactylus</taxon>
        <taxon>Eleutherodactylus</taxon>
    </lineage>
</organism>
<accession>P87393</accession>
<reference key="1">
    <citation type="journal article" date="1996" name="Dev. Biol.">
        <title>Patterns of distal-less gene expression and inductive interactions in the head of the direct developing frog Eleutherodactylus coqui.</title>
        <authorList>
            <person name="Fang H."/>
            <person name="Elinson R.P."/>
        </authorList>
    </citation>
    <scope>NUCLEOTIDE SEQUENCE [MRNA]</scope>
    <scope>DEVELOPMENTAL STAGE</scope>
</reference>
<dbReference type="EMBL" id="S83211">
    <property type="protein sequence ID" value="AAD14431.1"/>
    <property type="molecule type" value="mRNA"/>
</dbReference>
<dbReference type="SMR" id="P87393"/>
<dbReference type="GO" id="GO:0005634">
    <property type="term" value="C:nucleus"/>
    <property type="evidence" value="ECO:0007669"/>
    <property type="project" value="UniProtKB-SubCell"/>
</dbReference>
<dbReference type="GO" id="GO:0000981">
    <property type="term" value="F:DNA-binding transcription factor activity, RNA polymerase II-specific"/>
    <property type="evidence" value="ECO:0007669"/>
    <property type="project" value="TreeGrafter"/>
</dbReference>
<dbReference type="GO" id="GO:0000978">
    <property type="term" value="F:RNA polymerase II cis-regulatory region sequence-specific DNA binding"/>
    <property type="evidence" value="ECO:0007669"/>
    <property type="project" value="TreeGrafter"/>
</dbReference>
<dbReference type="GO" id="GO:0030154">
    <property type="term" value="P:cell differentiation"/>
    <property type="evidence" value="ECO:0007669"/>
    <property type="project" value="UniProtKB-KW"/>
</dbReference>
<dbReference type="GO" id="GO:0000122">
    <property type="term" value="P:negative regulation of transcription by RNA polymerase II"/>
    <property type="evidence" value="ECO:0007669"/>
    <property type="project" value="TreeGrafter"/>
</dbReference>
<dbReference type="CDD" id="cd00086">
    <property type="entry name" value="homeodomain"/>
    <property type="match status" value="1"/>
</dbReference>
<dbReference type="FunFam" id="1.10.10.60:FF:000048">
    <property type="entry name" value="Distal-less homeobox 2"/>
    <property type="match status" value="1"/>
</dbReference>
<dbReference type="Gene3D" id="1.10.10.60">
    <property type="entry name" value="Homeodomain-like"/>
    <property type="match status" value="1"/>
</dbReference>
<dbReference type="InterPro" id="IPR050460">
    <property type="entry name" value="Distal-less_Homeobox_TF"/>
</dbReference>
<dbReference type="InterPro" id="IPR001356">
    <property type="entry name" value="HD"/>
</dbReference>
<dbReference type="InterPro" id="IPR009057">
    <property type="entry name" value="Homeodomain-like_sf"/>
</dbReference>
<dbReference type="InterPro" id="IPR000047">
    <property type="entry name" value="HTH_motif"/>
</dbReference>
<dbReference type="PANTHER" id="PTHR24327">
    <property type="entry name" value="HOMEOBOX PROTEIN"/>
    <property type="match status" value="1"/>
</dbReference>
<dbReference type="PANTHER" id="PTHR24327:SF23">
    <property type="entry name" value="HOMEOBOX PROTEIN DLX-2"/>
    <property type="match status" value="1"/>
</dbReference>
<dbReference type="Pfam" id="PF00046">
    <property type="entry name" value="Homeodomain"/>
    <property type="match status" value="1"/>
</dbReference>
<dbReference type="PRINTS" id="PR00031">
    <property type="entry name" value="HTHREPRESSR"/>
</dbReference>
<dbReference type="SMART" id="SM00389">
    <property type="entry name" value="HOX"/>
    <property type="match status" value="1"/>
</dbReference>
<dbReference type="SUPFAM" id="SSF46689">
    <property type="entry name" value="Homeodomain-like"/>
    <property type="match status" value="1"/>
</dbReference>
<dbReference type="PROSITE" id="PS50071">
    <property type="entry name" value="HOMEOBOX_2"/>
    <property type="match status" value="1"/>
</dbReference>
<feature type="chain" id="PRO_0000049041" description="Homeobox protein DLX-2">
    <location>
        <begin position="1" status="less than"/>
        <end position="103" status="greater than"/>
    </location>
</feature>
<feature type="DNA-binding region" description="Homeobox" evidence="2">
    <location>
        <begin position="54"/>
        <end position="103" status="greater than"/>
    </location>
</feature>
<feature type="region of interest" description="Disordered" evidence="3">
    <location>
        <begin position="15"/>
        <end position="40"/>
    </location>
</feature>
<feature type="compositionally biased region" description="Low complexity" evidence="3">
    <location>
        <begin position="15"/>
        <end position="31"/>
    </location>
</feature>
<feature type="non-terminal residue">
    <location>
        <position position="1"/>
    </location>
</feature>
<feature type="non-terminal residue">
    <location>
        <position position="103"/>
    </location>
</feature>
<comment type="function">
    <text evidence="1">May act as a transcriptional activator by promoting terminal differentiation of interneurons in the developing retina. Likely to play a regulatory role in the development of the ventral forebrain. May play a role in craniofacial patterning and morphogenesis.</text>
</comment>
<comment type="subcellular location">
    <subcellularLocation>
        <location evidence="5">Nucleus</location>
    </subcellularLocation>
</comment>
<comment type="developmental stage">
    <text evidence="4">First appears in neural crest cells of the mandibular stream at stage 15. By TS4 (Townsend and Stewart) is active in the migrating neural crest cells of all streams: the mandibular, hyoid, and first and second branchial. Continuously expressed in the branchial arches through TS5 and TS6 and begins to be expressed at the edges of the limb buds at TS6. Detected in cells of the forebrain at stage TS5.</text>
</comment>
<comment type="similarity">
    <text evidence="5">Belongs to the distal-less homeobox family.</text>
</comment>
<proteinExistence type="evidence at transcript level"/>
<sequence>GIPDSAKSYDLTSYNGSYSSYGPYGTSPSPTHNDQEKEECEPEIRIVNGKPKKVRKPRTIYSSFQLAALQRRFQKTQYLALPERAELAASLGLTQTQVKIWFQ</sequence>
<evidence type="ECO:0000250" key="1">
    <source>
        <dbReference type="UniProtKB" id="P40764"/>
    </source>
</evidence>
<evidence type="ECO:0000255" key="2">
    <source>
        <dbReference type="PROSITE-ProRule" id="PRU00108"/>
    </source>
</evidence>
<evidence type="ECO:0000256" key="3">
    <source>
        <dbReference type="SAM" id="MobiDB-lite"/>
    </source>
</evidence>
<evidence type="ECO:0000269" key="4">
    <source>
    </source>
</evidence>
<evidence type="ECO:0000305" key="5"/>
<name>DLX2_ELECQ</name>
<protein>
    <recommendedName>
        <fullName>Homeobox protein DLX-2</fullName>
    </recommendedName>
</protein>
<gene>
    <name type="primary">DLX2</name>
</gene>
<keyword id="KW-0010">Activator</keyword>
<keyword id="KW-0217">Developmental protein</keyword>
<keyword id="KW-0221">Differentiation</keyword>
<keyword id="KW-0238">DNA-binding</keyword>
<keyword id="KW-0371">Homeobox</keyword>
<keyword id="KW-0539">Nucleus</keyword>
<keyword id="KW-0804">Transcription</keyword>
<keyword id="KW-0805">Transcription regulation</keyword>